<evidence type="ECO:0000255" key="1">
    <source>
        <dbReference type="HAMAP-Rule" id="MF_00011"/>
    </source>
</evidence>
<proteinExistence type="inferred from homology"/>
<keyword id="KW-0963">Cytoplasm</keyword>
<keyword id="KW-0342">GTP-binding</keyword>
<keyword id="KW-0436">Ligase</keyword>
<keyword id="KW-0460">Magnesium</keyword>
<keyword id="KW-0479">Metal-binding</keyword>
<keyword id="KW-0547">Nucleotide-binding</keyword>
<keyword id="KW-0658">Purine biosynthesis</keyword>
<keyword id="KW-1185">Reference proteome</keyword>
<feature type="chain" id="PRO_1000194761" description="Adenylosuccinate synthetase">
    <location>
        <begin position="1"/>
        <end position="432"/>
    </location>
</feature>
<feature type="active site" description="Proton acceptor" evidence="1">
    <location>
        <position position="14"/>
    </location>
</feature>
<feature type="active site" description="Proton donor" evidence="1">
    <location>
        <position position="42"/>
    </location>
</feature>
<feature type="binding site" evidence="1">
    <location>
        <begin position="13"/>
        <end position="19"/>
    </location>
    <ligand>
        <name>GTP</name>
        <dbReference type="ChEBI" id="CHEBI:37565"/>
    </ligand>
</feature>
<feature type="binding site" description="in other chain" evidence="1">
    <location>
        <begin position="14"/>
        <end position="17"/>
    </location>
    <ligand>
        <name>IMP</name>
        <dbReference type="ChEBI" id="CHEBI:58053"/>
        <note>ligand shared between dimeric partners</note>
    </ligand>
</feature>
<feature type="binding site" evidence="1">
    <location>
        <position position="14"/>
    </location>
    <ligand>
        <name>Mg(2+)</name>
        <dbReference type="ChEBI" id="CHEBI:18420"/>
    </ligand>
</feature>
<feature type="binding site" description="in other chain" evidence="1">
    <location>
        <begin position="39"/>
        <end position="42"/>
    </location>
    <ligand>
        <name>IMP</name>
        <dbReference type="ChEBI" id="CHEBI:58053"/>
        <note>ligand shared between dimeric partners</note>
    </ligand>
</feature>
<feature type="binding site" evidence="1">
    <location>
        <begin position="41"/>
        <end position="43"/>
    </location>
    <ligand>
        <name>GTP</name>
        <dbReference type="ChEBI" id="CHEBI:37565"/>
    </ligand>
</feature>
<feature type="binding site" evidence="1">
    <location>
        <position position="41"/>
    </location>
    <ligand>
        <name>Mg(2+)</name>
        <dbReference type="ChEBI" id="CHEBI:18420"/>
    </ligand>
</feature>
<feature type="binding site" description="in other chain" evidence="1">
    <location>
        <position position="130"/>
    </location>
    <ligand>
        <name>IMP</name>
        <dbReference type="ChEBI" id="CHEBI:58053"/>
        <note>ligand shared between dimeric partners</note>
    </ligand>
</feature>
<feature type="binding site" evidence="1">
    <location>
        <position position="144"/>
    </location>
    <ligand>
        <name>IMP</name>
        <dbReference type="ChEBI" id="CHEBI:58053"/>
        <note>ligand shared between dimeric partners</note>
    </ligand>
</feature>
<feature type="binding site" description="in other chain" evidence="1">
    <location>
        <position position="225"/>
    </location>
    <ligand>
        <name>IMP</name>
        <dbReference type="ChEBI" id="CHEBI:58053"/>
        <note>ligand shared between dimeric partners</note>
    </ligand>
</feature>
<feature type="binding site" description="in other chain" evidence="1">
    <location>
        <position position="240"/>
    </location>
    <ligand>
        <name>IMP</name>
        <dbReference type="ChEBI" id="CHEBI:58053"/>
        <note>ligand shared between dimeric partners</note>
    </ligand>
</feature>
<feature type="binding site" evidence="1">
    <location>
        <begin position="300"/>
        <end position="306"/>
    </location>
    <ligand>
        <name>substrate</name>
    </ligand>
</feature>
<feature type="binding site" description="in other chain" evidence="1">
    <location>
        <position position="304"/>
    </location>
    <ligand>
        <name>IMP</name>
        <dbReference type="ChEBI" id="CHEBI:58053"/>
        <note>ligand shared between dimeric partners</note>
    </ligand>
</feature>
<feature type="binding site" evidence="1">
    <location>
        <position position="306"/>
    </location>
    <ligand>
        <name>GTP</name>
        <dbReference type="ChEBI" id="CHEBI:37565"/>
    </ligand>
</feature>
<feature type="binding site" evidence="1">
    <location>
        <begin position="332"/>
        <end position="334"/>
    </location>
    <ligand>
        <name>GTP</name>
        <dbReference type="ChEBI" id="CHEBI:37565"/>
    </ligand>
</feature>
<feature type="binding site" evidence="1">
    <location>
        <begin position="415"/>
        <end position="417"/>
    </location>
    <ligand>
        <name>GTP</name>
        <dbReference type="ChEBI" id="CHEBI:37565"/>
    </ligand>
</feature>
<gene>
    <name evidence="1" type="primary">purA</name>
    <name type="ordered locus">HAPS_2160</name>
</gene>
<sequence>MGKSVAILGAQWGDEGKGKIVDLLTDRVKYVVRYQGGHNAGHTLIINGEKTVLRLIPSGILRENVTCLIGNGVVLSPAALMQEMGELESRGINVRDRLKISEACPLILPYHVAMDHAREAALGKNKIGTTGRGIGPAYEDKVSRRGLRVSDLFNREAFAEKLKTILEYYNFQLVHYYKVEPVDYQKTLDDVFAVADIITGMVADITTLLHKARANGDNILFEGAQGTMLDIDHGTYPFVTSSNTTAGGIATGSGFGPRNLDYVLGIIKAYCTRVGSGPFTTELFDEVGAEIARKGNEFGAVTGRPRRCGWFDAVAVRRAIQINSISGFCMTKLDVLDGFEELKICVAYKLQNGEIVEYSPLAAANWEGVEPIYETLPGWKENTFRVTKLEDLPQNAINYIKRIEEVLGVPVDILSTGPDRVETMILRDPFAA</sequence>
<protein>
    <recommendedName>
        <fullName evidence="1">Adenylosuccinate synthetase</fullName>
        <shortName evidence="1">AMPSase</shortName>
        <shortName evidence="1">AdSS</shortName>
        <ecNumber evidence="1">6.3.4.4</ecNumber>
    </recommendedName>
    <alternativeName>
        <fullName evidence="1">IMP--aspartate ligase</fullName>
    </alternativeName>
</protein>
<accession>B8F8E6</accession>
<name>PURA_GLAP5</name>
<comment type="function">
    <text evidence="1">Plays an important role in the de novo pathway of purine nucleotide biosynthesis. Catalyzes the first committed step in the biosynthesis of AMP from IMP.</text>
</comment>
<comment type="catalytic activity">
    <reaction evidence="1">
        <text>IMP + L-aspartate + GTP = N(6)-(1,2-dicarboxyethyl)-AMP + GDP + phosphate + 2 H(+)</text>
        <dbReference type="Rhea" id="RHEA:15753"/>
        <dbReference type="ChEBI" id="CHEBI:15378"/>
        <dbReference type="ChEBI" id="CHEBI:29991"/>
        <dbReference type="ChEBI" id="CHEBI:37565"/>
        <dbReference type="ChEBI" id="CHEBI:43474"/>
        <dbReference type="ChEBI" id="CHEBI:57567"/>
        <dbReference type="ChEBI" id="CHEBI:58053"/>
        <dbReference type="ChEBI" id="CHEBI:58189"/>
        <dbReference type="EC" id="6.3.4.4"/>
    </reaction>
</comment>
<comment type="cofactor">
    <cofactor evidence="1">
        <name>Mg(2+)</name>
        <dbReference type="ChEBI" id="CHEBI:18420"/>
    </cofactor>
    <text evidence="1">Binds 1 Mg(2+) ion per subunit.</text>
</comment>
<comment type="pathway">
    <text evidence="1">Purine metabolism; AMP biosynthesis via de novo pathway; AMP from IMP: step 1/2.</text>
</comment>
<comment type="subunit">
    <text evidence="1">Homodimer.</text>
</comment>
<comment type="subcellular location">
    <subcellularLocation>
        <location evidence="1">Cytoplasm</location>
    </subcellularLocation>
</comment>
<comment type="similarity">
    <text evidence="1">Belongs to the adenylosuccinate synthetase family.</text>
</comment>
<dbReference type="EC" id="6.3.4.4" evidence="1"/>
<dbReference type="EMBL" id="CP001321">
    <property type="protein sequence ID" value="ACL33598.1"/>
    <property type="molecule type" value="Genomic_DNA"/>
</dbReference>
<dbReference type="RefSeq" id="WP_015940092.1">
    <property type="nucleotide sequence ID" value="NC_011852.1"/>
</dbReference>
<dbReference type="SMR" id="B8F8E6"/>
<dbReference type="STRING" id="557723.HAPS_2160"/>
<dbReference type="KEGG" id="hap:HAPS_2160"/>
<dbReference type="PATRIC" id="fig|557723.8.peg.2133"/>
<dbReference type="HOGENOM" id="CLU_029848_0_0_6"/>
<dbReference type="UniPathway" id="UPA00075">
    <property type="reaction ID" value="UER00335"/>
</dbReference>
<dbReference type="Proteomes" id="UP000006743">
    <property type="component" value="Chromosome"/>
</dbReference>
<dbReference type="GO" id="GO:0005737">
    <property type="term" value="C:cytoplasm"/>
    <property type="evidence" value="ECO:0007669"/>
    <property type="project" value="UniProtKB-SubCell"/>
</dbReference>
<dbReference type="GO" id="GO:0004019">
    <property type="term" value="F:adenylosuccinate synthase activity"/>
    <property type="evidence" value="ECO:0007669"/>
    <property type="project" value="UniProtKB-UniRule"/>
</dbReference>
<dbReference type="GO" id="GO:0005525">
    <property type="term" value="F:GTP binding"/>
    <property type="evidence" value="ECO:0007669"/>
    <property type="project" value="UniProtKB-UniRule"/>
</dbReference>
<dbReference type="GO" id="GO:0000287">
    <property type="term" value="F:magnesium ion binding"/>
    <property type="evidence" value="ECO:0007669"/>
    <property type="project" value="UniProtKB-UniRule"/>
</dbReference>
<dbReference type="GO" id="GO:0044208">
    <property type="term" value="P:'de novo' AMP biosynthetic process"/>
    <property type="evidence" value="ECO:0007669"/>
    <property type="project" value="UniProtKB-UniRule"/>
</dbReference>
<dbReference type="GO" id="GO:0046040">
    <property type="term" value="P:IMP metabolic process"/>
    <property type="evidence" value="ECO:0007669"/>
    <property type="project" value="TreeGrafter"/>
</dbReference>
<dbReference type="CDD" id="cd03108">
    <property type="entry name" value="AdSS"/>
    <property type="match status" value="1"/>
</dbReference>
<dbReference type="FunFam" id="1.10.300.10:FF:000001">
    <property type="entry name" value="Adenylosuccinate synthetase"/>
    <property type="match status" value="1"/>
</dbReference>
<dbReference type="FunFam" id="3.90.170.10:FF:000001">
    <property type="entry name" value="Adenylosuccinate synthetase"/>
    <property type="match status" value="1"/>
</dbReference>
<dbReference type="Gene3D" id="3.40.440.10">
    <property type="entry name" value="Adenylosuccinate Synthetase, subunit A, domain 1"/>
    <property type="match status" value="1"/>
</dbReference>
<dbReference type="Gene3D" id="1.10.300.10">
    <property type="entry name" value="Adenylosuccinate Synthetase, subunit A, domain 2"/>
    <property type="match status" value="1"/>
</dbReference>
<dbReference type="Gene3D" id="3.90.170.10">
    <property type="entry name" value="Adenylosuccinate Synthetase, subunit A, domain 3"/>
    <property type="match status" value="1"/>
</dbReference>
<dbReference type="HAMAP" id="MF_00011">
    <property type="entry name" value="Adenylosucc_synth"/>
    <property type="match status" value="1"/>
</dbReference>
<dbReference type="InterPro" id="IPR018220">
    <property type="entry name" value="Adenylosuccin_syn_GTP-bd"/>
</dbReference>
<dbReference type="InterPro" id="IPR033128">
    <property type="entry name" value="Adenylosuccin_syn_Lys_AS"/>
</dbReference>
<dbReference type="InterPro" id="IPR042109">
    <property type="entry name" value="Adenylosuccinate_synth_dom1"/>
</dbReference>
<dbReference type="InterPro" id="IPR042110">
    <property type="entry name" value="Adenylosuccinate_synth_dom2"/>
</dbReference>
<dbReference type="InterPro" id="IPR042111">
    <property type="entry name" value="Adenylosuccinate_synth_dom3"/>
</dbReference>
<dbReference type="InterPro" id="IPR001114">
    <property type="entry name" value="Adenylosuccinate_synthetase"/>
</dbReference>
<dbReference type="InterPro" id="IPR027417">
    <property type="entry name" value="P-loop_NTPase"/>
</dbReference>
<dbReference type="NCBIfam" id="NF002223">
    <property type="entry name" value="PRK01117.1"/>
    <property type="match status" value="1"/>
</dbReference>
<dbReference type="NCBIfam" id="TIGR00184">
    <property type="entry name" value="purA"/>
    <property type="match status" value="1"/>
</dbReference>
<dbReference type="PANTHER" id="PTHR11846">
    <property type="entry name" value="ADENYLOSUCCINATE SYNTHETASE"/>
    <property type="match status" value="1"/>
</dbReference>
<dbReference type="PANTHER" id="PTHR11846:SF0">
    <property type="entry name" value="ADENYLOSUCCINATE SYNTHETASE"/>
    <property type="match status" value="1"/>
</dbReference>
<dbReference type="Pfam" id="PF00709">
    <property type="entry name" value="Adenylsucc_synt"/>
    <property type="match status" value="1"/>
</dbReference>
<dbReference type="SMART" id="SM00788">
    <property type="entry name" value="Adenylsucc_synt"/>
    <property type="match status" value="1"/>
</dbReference>
<dbReference type="SUPFAM" id="SSF52540">
    <property type="entry name" value="P-loop containing nucleoside triphosphate hydrolases"/>
    <property type="match status" value="1"/>
</dbReference>
<dbReference type="PROSITE" id="PS01266">
    <property type="entry name" value="ADENYLOSUCCIN_SYN_1"/>
    <property type="match status" value="1"/>
</dbReference>
<dbReference type="PROSITE" id="PS00513">
    <property type="entry name" value="ADENYLOSUCCIN_SYN_2"/>
    <property type="match status" value="1"/>
</dbReference>
<reference key="1">
    <citation type="journal article" date="2009" name="J. Bacteriol.">
        <title>Complete genome sequence of Haemophilus parasuis SH0165.</title>
        <authorList>
            <person name="Yue M."/>
            <person name="Yang F."/>
            <person name="Yang J."/>
            <person name="Bei W."/>
            <person name="Cai X."/>
            <person name="Chen L."/>
            <person name="Dong J."/>
            <person name="Zhou R."/>
            <person name="Jin M."/>
            <person name="Jin Q."/>
            <person name="Chen H."/>
        </authorList>
    </citation>
    <scope>NUCLEOTIDE SEQUENCE [LARGE SCALE GENOMIC DNA]</scope>
    <source>
        <strain>SH0165</strain>
    </source>
</reference>
<organism>
    <name type="scientific">Glaesserella parasuis serovar 5 (strain SH0165)</name>
    <name type="common">Haemophilus parasuis</name>
    <dbReference type="NCBI Taxonomy" id="557723"/>
    <lineage>
        <taxon>Bacteria</taxon>
        <taxon>Pseudomonadati</taxon>
        <taxon>Pseudomonadota</taxon>
        <taxon>Gammaproteobacteria</taxon>
        <taxon>Pasteurellales</taxon>
        <taxon>Pasteurellaceae</taxon>
        <taxon>Glaesserella</taxon>
    </lineage>
</organism>